<name>SELA_ECOLC</name>
<sequence length="463" mass="50607">MTTETRSLYSQLPAIDRLLRDSSFLSLRDTYGHTRVVELLRQMLDEAREVIRGSQTLPAWCENWAQEVDARLTKEAQSALRPVINLTGTVLHTNLGRALQAEAAVEAVAQAMRSPVTLEYDLDDAGRGHRDRALAQLLCRITGAEDACIVNNNAAAVLLMLAATASGKEVVVSRGELVEIGGAFRIPDVMRQAGCTLHEVGTTNRTHANDYRQAVNENTALLMKVHTSNYSIQGFTKAIDEAELVALGKELDVPVVTDLGSGSLVDLSQYGLPKEPMPQELIAAGVSLVSFSGDKLLGGPQAGIIVGKKEMIARLQSHPLKRALRADKMTLAALEATLRLYLHPEALSEKLPTLRLLTRSAEVIQIQAQRLQAPLAAHYGAEFAVQVMPCLSQIGSGSLPVDRLPSAALTFTPHDGRGSHLESLAARWRELPVPVIGRIYDGRLWLDLRCLEDEQRFLEMLLK</sequence>
<feature type="chain" id="PRO_1000080559" description="L-seryl-tRNA(Sec) selenium transferase">
    <location>
        <begin position="1"/>
        <end position="463"/>
    </location>
</feature>
<feature type="modified residue" description="N6-(pyridoxal phosphate)lysine" evidence="1">
    <location>
        <position position="295"/>
    </location>
</feature>
<keyword id="KW-0963">Cytoplasm</keyword>
<keyword id="KW-0648">Protein biosynthesis</keyword>
<keyword id="KW-0663">Pyridoxal phosphate</keyword>
<keyword id="KW-0711">Selenium</keyword>
<keyword id="KW-0808">Transferase</keyword>
<proteinExistence type="inferred from homology"/>
<evidence type="ECO:0000255" key="1">
    <source>
        <dbReference type="HAMAP-Rule" id="MF_00423"/>
    </source>
</evidence>
<gene>
    <name evidence="1" type="primary">selA</name>
    <name type="ordered locus">EcolC_0122</name>
</gene>
<comment type="function">
    <text evidence="1">Converts seryl-tRNA(Sec) to selenocysteinyl-tRNA(Sec) required for selenoprotein biosynthesis.</text>
</comment>
<comment type="catalytic activity">
    <reaction evidence="1">
        <text>L-seryl-tRNA(Sec) + selenophosphate + H(+) = L-selenocysteinyl-tRNA(Sec) + phosphate</text>
        <dbReference type="Rhea" id="RHEA:22728"/>
        <dbReference type="Rhea" id="RHEA-COMP:9742"/>
        <dbReference type="Rhea" id="RHEA-COMP:9743"/>
        <dbReference type="ChEBI" id="CHEBI:15378"/>
        <dbReference type="ChEBI" id="CHEBI:16144"/>
        <dbReference type="ChEBI" id="CHEBI:43474"/>
        <dbReference type="ChEBI" id="CHEBI:78533"/>
        <dbReference type="ChEBI" id="CHEBI:78573"/>
        <dbReference type="EC" id="2.9.1.1"/>
    </reaction>
</comment>
<comment type="cofactor">
    <cofactor evidence="1">
        <name>pyridoxal 5'-phosphate</name>
        <dbReference type="ChEBI" id="CHEBI:597326"/>
    </cofactor>
</comment>
<comment type="pathway">
    <text evidence="1">Aminoacyl-tRNA biosynthesis; selenocysteinyl-tRNA(Sec) biosynthesis; selenocysteinyl-tRNA(Sec) from L-seryl-tRNA(Sec) (bacterial route): step 1/1.</text>
</comment>
<comment type="subunit">
    <text evidence="1">Homodecamer; pentamer of dimers. Binds only one seryl-tRNA(Sec) per dimer.</text>
</comment>
<comment type="subcellular location">
    <subcellularLocation>
        <location evidence="1">Cytoplasm</location>
    </subcellularLocation>
</comment>
<comment type="similarity">
    <text evidence="1">Belongs to the SelA family.</text>
</comment>
<reference key="1">
    <citation type="submission" date="2008-02" db="EMBL/GenBank/DDBJ databases">
        <title>Complete sequence of Escherichia coli C str. ATCC 8739.</title>
        <authorList>
            <person name="Copeland A."/>
            <person name="Lucas S."/>
            <person name="Lapidus A."/>
            <person name="Glavina del Rio T."/>
            <person name="Dalin E."/>
            <person name="Tice H."/>
            <person name="Bruce D."/>
            <person name="Goodwin L."/>
            <person name="Pitluck S."/>
            <person name="Kiss H."/>
            <person name="Brettin T."/>
            <person name="Detter J.C."/>
            <person name="Han C."/>
            <person name="Kuske C.R."/>
            <person name="Schmutz J."/>
            <person name="Larimer F."/>
            <person name="Land M."/>
            <person name="Hauser L."/>
            <person name="Kyrpides N."/>
            <person name="Mikhailova N."/>
            <person name="Ingram L."/>
            <person name="Richardson P."/>
        </authorList>
    </citation>
    <scope>NUCLEOTIDE SEQUENCE [LARGE SCALE GENOMIC DNA]</scope>
    <source>
        <strain>ATCC 8739 / DSM 1576 / NBRC 3972 / NCIMB 8545 / WDCM 00012 / Crooks</strain>
    </source>
</reference>
<organism>
    <name type="scientific">Escherichia coli (strain ATCC 8739 / DSM 1576 / NBRC 3972 / NCIMB 8545 / WDCM 00012 / Crooks)</name>
    <dbReference type="NCBI Taxonomy" id="481805"/>
    <lineage>
        <taxon>Bacteria</taxon>
        <taxon>Pseudomonadati</taxon>
        <taxon>Pseudomonadota</taxon>
        <taxon>Gammaproteobacteria</taxon>
        <taxon>Enterobacterales</taxon>
        <taxon>Enterobacteriaceae</taxon>
        <taxon>Escherichia</taxon>
    </lineage>
</organism>
<dbReference type="EC" id="2.9.1.1" evidence="1"/>
<dbReference type="EMBL" id="CP000946">
    <property type="protein sequence ID" value="ACA75806.1"/>
    <property type="molecule type" value="Genomic_DNA"/>
</dbReference>
<dbReference type="RefSeq" id="WP_000206275.1">
    <property type="nucleotide sequence ID" value="NZ_MTFT01000030.1"/>
</dbReference>
<dbReference type="SMR" id="B1IZK2"/>
<dbReference type="GeneID" id="75204641"/>
<dbReference type="KEGG" id="ecl:EcolC_0122"/>
<dbReference type="HOGENOM" id="CLU_038142_1_0_6"/>
<dbReference type="UniPathway" id="UPA00906">
    <property type="reaction ID" value="UER00896"/>
</dbReference>
<dbReference type="GO" id="GO:0005737">
    <property type="term" value="C:cytoplasm"/>
    <property type="evidence" value="ECO:0007669"/>
    <property type="project" value="UniProtKB-SubCell"/>
</dbReference>
<dbReference type="GO" id="GO:0004125">
    <property type="term" value="F:L-seryl-tRNA(Sec) selenium transferase activity"/>
    <property type="evidence" value="ECO:0007669"/>
    <property type="project" value="UniProtKB-UniRule"/>
</dbReference>
<dbReference type="GO" id="GO:0001717">
    <property type="term" value="P:conversion of seryl-tRNAsec to selenocys-tRNAsec"/>
    <property type="evidence" value="ECO:0007669"/>
    <property type="project" value="UniProtKB-UniRule"/>
</dbReference>
<dbReference type="GO" id="GO:0001514">
    <property type="term" value="P:selenocysteine incorporation"/>
    <property type="evidence" value="ECO:0007669"/>
    <property type="project" value="UniProtKB-UniRule"/>
</dbReference>
<dbReference type="FunFam" id="3.40.640.10:FF:000028">
    <property type="entry name" value="L-seryl-tRNA(Sec) selenium transferase"/>
    <property type="match status" value="1"/>
</dbReference>
<dbReference type="FunFam" id="3.90.1150.180:FF:000001">
    <property type="entry name" value="L-seryl-tRNA(Sec) selenium transferase"/>
    <property type="match status" value="1"/>
</dbReference>
<dbReference type="Gene3D" id="3.90.1150.180">
    <property type="match status" value="1"/>
</dbReference>
<dbReference type="Gene3D" id="3.40.640.10">
    <property type="entry name" value="Type I PLP-dependent aspartate aminotransferase-like (Major domain)"/>
    <property type="match status" value="1"/>
</dbReference>
<dbReference type="HAMAP" id="MF_00423">
    <property type="entry name" value="SelA"/>
    <property type="match status" value="1"/>
</dbReference>
<dbReference type="InterPro" id="IPR015424">
    <property type="entry name" value="PyrdxlP-dep_Trfase"/>
</dbReference>
<dbReference type="InterPro" id="IPR015421">
    <property type="entry name" value="PyrdxlP-dep_Trfase_major"/>
</dbReference>
<dbReference type="InterPro" id="IPR018319">
    <property type="entry name" value="SelA-like"/>
</dbReference>
<dbReference type="InterPro" id="IPR004534">
    <property type="entry name" value="SelA_trans"/>
</dbReference>
<dbReference type="InterPro" id="IPR025862">
    <property type="entry name" value="SelA_trans_N_dom"/>
</dbReference>
<dbReference type="NCBIfam" id="TIGR00474">
    <property type="entry name" value="selA"/>
    <property type="match status" value="1"/>
</dbReference>
<dbReference type="PANTHER" id="PTHR32328">
    <property type="entry name" value="L-SERYL-TRNA(SEC) SELENIUM TRANSFERASE"/>
    <property type="match status" value="1"/>
</dbReference>
<dbReference type="PANTHER" id="PTHR32328:SF0">
    <property type="entry name" value="L-SERYL-TRNA(SEC) SELENIUM TRANSFERASE"/>
    <property type="match status" value="1"/>
</dbReference>
<dbReference type="Pfam" id="PF12390">
    <property type="entry name" value="Se-cys_synth_N"/>
    <property type="match status" value="1"/>
</dbReference>
<dbReference type="Pfam" id="PF03841">
    <property type="entry name" value="SelA"/>
    <property type="match status" value="1"/>
</dbReference>
<dbReference type="SUPFAM" id="SSF53383">
    <property type="entry name" value="PLP-dependent transferases"/>
    <property type="match status" value="1"/>
</dbReference>
<accession>B1IZK2</accession>
<protein>
    <recommendedName>
        <fullName evidence="1">L-seryl-tRNA(Sec) selenium transferase</fullName>
        <ecNumber evidence="1">2.9.1.1</ecNumber>
    </recommendedName>
    <alternativeName>
        <fullName evidence="1">Selenocysteine synthase</fullName>
        <shortName evidence="1">Sec synthase</shortName>
    </alternativeName>
    <alternativeName>
        <fullName evidence="1">Selenocysteinyl-tRNA(Sec) synthase</fullName>
    </alternativeName>
</protein>